<reference key="1">
    <citation type="journal article" date="1989" name="Nucleic Acids Res.">
        <title>Nucleotide sequence and transcription of the sugar beet mitochondrial F0F1-ATPase subunit 9 gene.</title>
        <authorList>
            <person name="Xue Y."/>
            <person name="Thomas C.M."/>
            <person name="Davies D.R."/>
        </authorList>
    </citation>
    <scope>NUCLEOTIDE SEQUENCE [GENOMIC DNA]</scope>
</reference>
<protein>
    <recommendedName>
        <fullName>ATP synthase subunit 9, mitochondrial</fullName>
        <ecNumber>7.1.2.2</ecNumber>
    </recommendedName>
    <alternativeName>
        <fullName>Lipid-binding protein</fullName>
    </alternativeName>
</protein>
<organism>
    <name type="scientific">Beta vulgaris</name>
    <name type="common">Sugar beet</name>
    <dbReference type="NCBI Taxonomy" id="161934"/>
    <lineage>
        <taxon>Eukaryota</taxon>
        <taxon>Viridiplantae</taxon>
        <taxon>Streptophyta</taxon>
        <taxon>Embryophyta</taxon>
        <taxon>Tracheophyta</taxon>
        <taxon>Spermatophyta</taxon>
        <taxon>Magnoliopsida</taxon>
        <taxon>eudicotyledons</taxon>
        <taxon>Gunneridae</taxon>
        <taxon>Pentapetalae</taxon>
        <taxon>Caryophyllales</taxon>
        <taxon>Chenopodiaceae</taxon>
        <taxon>Betoideae</taxon>
        <taxon>Beta</taxon>
    </lineage>
</organism>
<keyword id="KW-0067">ATP-binding</keyword>
<keyword id="KW-0138">CF(0)</keyword>
<keyword id="KW-0375">Hydrogen ion transport</keyword>
<keyword id="KW-0406">Ion transport</keyword>
<keyword id="KW-0446">Lipid-binding</keyword>
<keyword id="KW-0472">Membrane</keyword>
<keyword id="KW-0496">Mitochondrion</keyword>
<keyword id="KW-0547">Nucleotide-binding</keyword>
<keyword id="KW-1278">Translocase</keyword>
<keyword id="KW-0812">Transmembrane</keyword>
<keyword id="KW-1133">Transmembrane helix</keyword>
<keyword id="KW-0813">Transport</keyword>
<comment type="function">
    <text>This protein is one of the chains of the nonenzymatic membrane component (F0) of mitochondrial ATPase.</text>
</comment>
<comment type="catalytic activity">
    <reaction>
        <text>ATP + H2O + 4 H(+)(in) = ADP + phosphate + 5 H(+)(out)</text>
        <dbReference type="Rhea" id="RHEA:57720"/>
        <dbReference type="ChEBI" id="CHEBI:15377"/>
        <dbReference type="ChEBI" id="CHEBI:15378"/>
        <dbReference type="ChEBI" id="CHEBI:30616"/>
        <dbReference type="ChEBI" id="CHEBI:43474"/>
        <dbReference type="ChEBI" id="CHEBI:456216"/>
        <dbReference type="EC" id="7.1.2.2"/>
    </reaction>
</comment>
<comment type="subunit">
    <text>F-type ATPases have 2 components, CF(1) - the catalytic core - and CF(0) - the membrane proton channel. CF(1) has five subunits: alpha(3), beta(3), gamma(1), delta(1), epsilon(1). CF(0) has three main subunits: a, b and c.</text>
</comment>
<comment type="subcellular location">
    <subcellularLocation>
        <location evidence="3">Mitochondrion membrane</location>
        <topology evidence="3">Multi-pass membrane protein</topology>
    </subcellularLocation>
</comment>
<comment type="similarity">
    <text evidence="3">Belongs to the ATPase C chain family.</text>
</comment>
<gene>
    <name type="primary">ATP9</name>
</gene>
<geneLocation type="mitochondrion"/>
<dbReference type="EC" id="7.1.2.2"/>
<dbReference type="EMBL" id="X16593">
    <property type="protein sequence ID" value="CAA34604.1"/>
    <property type="molecule type" value="Genomic_DNA"/>
</dbReference>
<dbReference type="PIR" id="S14907">
    <property type="entry name" value="LWET9"/>
</dbReference>
<dbReference type="SMR" id="P14571"/>
<dbReference type="GO" id="GO:0031966">
    <property type="term" value="C:mitochondrial membrane"/>
    <property type="evidence" value="ECO:0007669"/>
    <property type="project" value="UniProtKB-SubCell"/>
</dbReference>
<dbReference type="GO" id="GO:0045259">
    <property type="term" value="C:proton-transporting ATP synthase complex"/>
    <property type="evidence" value="ECO:0007669"/>
    <property type="project" value="UniProtKB-KW"/>
</dbReference>
<dbReference type="GO" id="GO:0033177">
    <property type="term" value="C:proton-transporting two-sector ATPase complex, proton-transporting domain"/>
    <property type="evidence" value="ECO:0007669"/>
    <property type="project" value="InterPro"/>
</dbReference>
<dbReference type="GO" id="GO:0005524">
    <property type="term" value="F:ATP binding"/>
    <property type="evidence" value="ECO:0007669"/>
    <property type="project" value="UniProtKB-KW"/>
</dbReference>
<dbReference type="GO" id="GO:0008289">
    <property type="term" value="F:lipid binding"/>
    <property type="evidence" value="ECO:0007669"/>
    <property type="project" value="UniProtKB-KW"/>
</dbReference>
<dbReference type="GO" id="GO:0015078">
    <property type="term" value="F:proton transmembrane transporter activity"/>
    <property type="evidence" value="ECO:0007669"/>
    <property type="project" value="InterPro"/>
</dbReference>
<dbReference type="GO" id="GO:0015986">
    <property type="term" value="P:proton motive force-driven ATP synthesis"/>
    <property type="evidence" value="ECO:0007669"/>
    <property type="project" value="InterPro"/>
</dbReference>
<dbReference type="CDD" id="cd18182">
    <property type="entry name" value="ATP-synt_Fo_c_ATP5G3"/>
    <property type="match status" value="1"/>
</dbReference>
<dbReference type="FunFam" id="1.20.20.10:FF:000005">
    <property type="entry name" value="ATP synthase subunit 9, mitochondrial"/>
    <property type="match status" value="1"/>
</dbReference>
<dbReference type="Gene3D" id="1.20.20.10">
    <property type="entry name" value="F1F0 ATP synthase subunit C"/>
    <property type="match status" value="1"/>
</dbReference>
<dbReference type="HAMAP" id="MF_01396">
    <property type="entry name" value="ATP_synth_c_bact"/>
    <property type="match status" value="1"/>
</dbReference>
<dbReference type="InterPro" id="IPR000454">
    <property type="entry name" value="ATP_synth_F0_csu"/>
</dbReference>
<dbReference type="InterPro" id="IPR020537">
    <property type="entry name" value="ATP_synth_F0_csu_DDCD_BS"/>
</dbReference>
<dbReference type="InterPro" id="IPR038662">
    <property type="entry name" value="ATP_synth_F0_csu_sf"/>
</dbReference>
<dbReference type="InterPro" id="IPR002379">
    <property type="entry name" value="ATPase_proteolipid_c-like_dom"/>
</dbReference>
<dbReference type="InterPro" id="IPR035921">
    <property type="entry name" value="F/V-ATP_Csub_sf"/>
</dbReference>
<dbReference type="PANTHER" id="PTHR10031">
    <property type="entry name" value="ATP SYNTHASE LIPID-BINDING PROTEIN, MITOCHONDRIAL"/>
    <property type="match status" value="1"/>
</dbReference>
<dbReference type="PANTHER" id="PTHR10031:SF0">
    <property type="entry name" value="ATPASE PROTEIN 9"/>
    <property type="match status" value="1"/>
</dbReference>
<dbReference type="Pfam" id="PF00137">
    <property type="entry name" value="ATP-synt_C"/>
    <property type="match status" value="1"/>
</dbReference>
<dbReference type="PRINTS" id="PR00124">
    <property type="entry name" value="ATPASEC"/>
</dbReference>
<dbReference type="SUPFAM" id="SSF81333">
    <property type="entry name" value="F1F0 ATP synthase subunit C"/>
    <property type="match status" value="1"/>
</dbReference>
<dbReference type="PROSITE" id="PS00605">
    <property type="entry name" value="ATPASE_C"/>
    <property type="match status" value="1"/>
</dbReference>
<evidence type="ECO:0000250" key="1"/>
<evidence type="ECO:0000255" key="2"/>
<evidence type="ECO:0000305" key="3"/>
<proteinExistence type="inferred from homology"/>
<sequence length="88" mass="9007">MLEGAKSIGAGAATIASAGAAIGIGNVFSSLIHSVARNPSLAKQLFGYAILGFALSELIALFALMMAFLILFAFRFFSKKGKLAGAPV</sequence>
<feature type="chain" id="PRO_0000112209" description="ATP synthase subunit 9, mitochondrial">
    <location>
        <begin position="1"/>
        <end position="88"/>
    </location>
</feature>
<feature type="transmembrane region" description="Helical" evidence="2">
    <location>
        <begin position="8"/>
        <end position="28"/>
    </location>
</feature>
<feature type="transmembrane region" description="Helical" evidence="2">
    <location>
        <begin position="45"/>
        <end position="72"/>
    </location>
</feature>
<feature type="site" description="Reversibly protonated during proton transport" evidence="1">
    <location>
        <position position="57"/>
    </location>
</feature>
<name>ATP9_BETVU</name>
<accession>P14571</accession>